<protein>
    <recommendedName>
        <fullName evidence="5">Hemoglobin subunit alpha</fullName>
    </recommendedName>
</protein>
<organism>
    <name type="scientific">Tamias merriami</name>
    <name type="common">Merriam's chipmunk</name>
    <name type="synonym">Neotamias merriami</name>
    <dbReference type="NCBI Taxonomy" id="123787"/>
    <lineage>
        <taxon>Eukaryota</taxon>
        <taxon>Metazoa</taxon>
        <taxon>Chordata</taxon>
        <taxon>Craniata</taxon>
        <taxon>Vertebrata</taxon>
        <taxon>Euteleostomi</taxon>
        <taxon>Mammalia</taxon>
        <taxon>Eutheria</taxon>
        <taxon>Euarchontoglires</taxon>
        <taxon>Glires</taxon>
        <taxon>Rodentia</taxon>
        <taxon>Sciuromorpha</taxon>
        <taxon>Sciuridae</taxon>
        <taxon>Xerinae</taxon>
        <taxon>Marmotini</taxon>
        <taxon>Tamias</taxon>
    </lineage>
</organism>
<comment type="function">
    <text evidence="6">Involved in oxygen transport from the lung to the various peripheral tissues.</text>
</comment>
<comment type="subunit">
    <text evidence="6">Heterotetramer of two alpha chains and two beta chains.</text>
</comment>
<comment type="tissue specificity">
    <text evidence="6">Red blood cells.</text>
</comment>
<comment type="similarity">
    <text evidence="3">Belongs to the globin family.</text>
</comment>
<evidence type="ECO:0000250" key="1">
    <source>
        <dbReference type="UniProtKB" id="P01942"/>
    </source>
</evidence>
<evidence type="ECO:0000250" key="2">
    <source>
        <dbReference type="UniProtKB" id="P69905"/>
    </source>
</evidence>
<evidence type="ECO:0000255" key="3">
    <source>
        <dbReference type="PROSITE-ProRule" id="PRU00238"/>
    </source>
</evidence>
<evidence type="ECO:0000269" key="4">
    <source>
    </source>
</evidence>
<evidence type="ECO:0000303" key="5">
    <source>
    </source>
</evidence>
<evidence type="ECO:0000305" key="6"/>
<accession>B3EWC7</accession>
<feature type="chain" id="PRO_0000415591" description="Hemoglobin subunit alpha">
    <location>
        <begin position="1"/>
        <end position="141"/>
    </location>
</feature>
<feature type="domain" description="Globin" evidence="3">
    <location>
        <begin position="1"/>
        <end position="141"/>
    </location>
</feature>
<feature type="binding site" evidence="3">
    <location>
        <position position="58"/>
    </location>
    <ligand>
        <name>O2</name>
        <dbReference type="ChEBI" id="CHEBI:15379"/>
    </ligand>
</feature>
<feature type="binding site" description="proximal binding residue" evidence="3">
    <location>
        <position position="87"/>
    </location>
    <ligand>
        <name>heme b</name>
        <dbReference type="ChEBI" id="CHEBI:60344"/>
    </ligand>
    <ligandPart>
        <name>Fe</name>
        <dbReference type="ChEBI" id="CHEBI:18248"/>
    </ligandPart>
</feature>
<feature type="modified residue" description="Phosphoserine" evidence="2">
    <location>
        <position position="3"/>
    </location>
</feature>
<feature type="modified residue" description="N6-succinyllysine" evidence="1">
    <location>
        <position position="7"/>
    </location>
</feature>
<feature type="modified residue" description="Phosphothreonine" evidence="2">
    <location>
        <position position="8"/>
    </location>
</feature>
<feature type="modified residue" description="N6-succinyllysine" evidence="1">
    <location>
        <position position="11"/>
    </location>
</feature>
<feature type="modified residue" description="N6-acetyllysine; alternate" evidence="2">
    <location>
        <position position="16"/>
    </location>
</feature>
<feature type="modified residue" description="N6-succinyllysine; alternate" evidence="1">
    <location>
        <position position="16"/>
    </location>
</feature>
<feature type="modified residue" description="Phosphotyrosine" evidence="2">
    <location>
        <position position="24"/>
    </location>
</feature>
<feature type="modified residue" description="Phosphoserine" evidence="2">
    <location>
        <position position="35"/>
    </location>
</feature>
<feature type="modified residue" description="N6-succinyllysine" evidence="1">
    <location>
        <position position="40"/>
    </location>
</feature>
<feature type="modified residue" description="Phosphoserine" evidence="2">
    <location>
        <position position="49"/>
    </location>
</feature>
<feature type="modified residue" description="Phosphoserine" evidence="1">
    <location>
        <position position="102"/>
    </location>
</feature>
<feature type="modified residue" description="Phosphothreonine" evidence="1">
    <location>
        <position position="108"/>
    </location>
</feature>
<feature type="modified residue" description="Phosphoserine" evidence="1">
    <location>
        <position position="124"/>
    </location>
</feature>
<feature type="modified residue" description="Phosphothreonine" evidence="1">
    <location>
        <position position="134"/>
    </location>
</feature>
<feature type="modified residue" description="Phosphothreonine" evidence="1">
    <location>
        <position position="137"/>
    </location>
</feature>
<feature type="modified residue" description="Phosphoserine" evidence="1">
    <location>
        <position position="138"/>
    </location>
</feature>
<feature type="unsure residue" description="L or I" evidence="4">
    <location>
        <position position="2"/>
    </location>
</feature>
<feature type="unsure residue" description="L or I" evidence="4">
    <location>
        <position position="29"/>
    </location>
</feature>
<feature type="unsure residue" description="L or I" evidence="4">
    <location>
        <position position="34"/>
    </location>
</feature>
<feature type="unsure residue" description="L or I" evidence="4">
    <location>
        <position position="48"/>
    </location>
</feature>
<feature type="unsure residue" description="L or I" evidence="4">
    <location>
        <position position="66"/>
    </location>
</feature>
<feature type="unsure residue" description="L or I" evidence="4">
    <location>
        <position position="73"/>
    </location>
</feature>
<feature type="unsure residue" description="L or I" evidence="4">
    <location>
        <position position="76"/>
    </location>
</feature>
<feature type="unsure residue" description="L or I" evidence="4">
    <location>
        <position position="80"/>
    </location>
</feature>
<feature type="unsure residue" description="L or I" evidence="4">
    <location>
        <position position="83"/>
    </location>
</feature>
<feature type="unsure residue" description="L or I" evidence="4">
    <location>
        <position position="86"/>
    </location>
</feature>
<feature type="unsure residue" description="L or I" evidence="4">
    <location>
        <position position="91"/>
    </location>
</feature>
<feature type="unsure residue" description="L or I" evidence="4">
    <location>
        <position position="100"/>
    </location>
</feature>
<feature type="unsure residue" description="L or I" evidence="4">
    <location>
        <position position="101"/>
    </location>
</feature>
<feature type="unsure residue" description="L or I" evidence="4">
    <location>
        <position position="105"/>
    </location>
</feature>
<feature type="unsure residue" description="L or I" evidence="4">
    <location>
        <position position="106"/>
    </location>
</feature>
<feature type="unsure residue" description="L or I" evidence="4">
    <location>
        <position position="109"/>
    </location>
</feature>
<feature type="unsure residue" description="L or I" evidence="4">
    <location>
        <position position="125"/>
    </location>
</feature>
<feature type="unsure residue" description="L or I" evidence="4">
    <location>
        <position position="129"/>
    </location>
</feature>
<feature type="unsure residue" description="L or I" evidence="4">
    <location>
        <position position="136"/>
    </location>
</feature>
<proteinExistence type="evidence at protein level"/>
<sequence length="141" mass="15061">VLSPADKTNVKAAWEKVGGHGAAYGAEALERMFLSFPTTKTYFPHFDLSHGSAQVQGHGKKVADALANAAGHLDDLPSALSALSDLHAHKLRVDPVNFKLLSHCLLVTLAAHHPAEFTPAVHASLDKFLATVSTVLTSKYR</sequence>
<dbReference type="BMRB" id="B3EWC7"/>
<dbReference type="SMR" id="B3EWC7"/>
<dbReference type="GO" id="GO:0072562">
    <property type="term" value="C:blood microparticle"/>
    <property type="evidence" value="ECO:0007669"/>
    <property type="project" value="TreeGrafter"/>
</dbReference>
<dbReference type="GO" id="GO:0031838">
    <property type="term" value="C:haptoglobin-hemoglobin complex"/>
    <property type="evidence" value="ECO:0007669"/>
    <property type="project" value="TreeGrafter"/>
</dbReference>
<dbReference type="GO" id="GO:0005833">
    <property type="term" value="C:hemoglobin complex"/>
    <property type="evidence" value="ECO:0007669"/>
    <property type="project" value="InterPro"/>
</dbReference>
<dbReference type="GO" id="GO:0031720">
    <property type="term" value="F:haptoglobin binding"/>
    <property type="evidence" value="ECO:0007669"/>
    <property type="project" value="TreeGrafter"/>
</dbReference>
<dbReference type="GO" id="GO:0020037">
    <property type="term" value="F:heme binding"/>
    <property type="evidence" value="ECO:0007669"/>
    <property type="project" value="InterPro"/>
</dbReference>
<dbReference type="GO" id="GO:0005506">
    <property type="term" value="F:iron ion binding"/>
    <property type="evidence" value="ECO:0007669"/>
    <property type="project" value="InterPro"/>
</dbReference>
<dbReference type="GO" id="GO:0043177">
    <property type="term" value="F:organic acid binding"/>
    <property type="evidence" value="ECO:0007669"/>
    <property type="project" value="TreeGrafter"/>
</dbReference>
<dbReference type="GO" id="GO:0019825">
    <property type="term" value="F:oxygen binding"/>
    <property type="evidence" value="ECO:0007669"/>
    <property type="project" value="InterPro"/>
</dbReference>
<dbReference type="GO" id="GO:0005344">
    <property type="term" value="F:oxygen carrier activity"/>
    <property type="evidence" value="ECO:0007669"/>
    <property type="project" value="UniProtKB-KW"/>
</dbReference>
<dbReference type="GO" id="GO:0004601">
    <property type="term" value="F:peroxidase activity"/>
    <property type="evidence" value="ECO:0007669"/>
    <property type="project" value="TreeGrafter"/>
</dbReference>
<dbReference type="GO" id="GO:0042744">
    <property type="term" value="P:hydrogen peroxide catabolic process"/>
    <property type="evidence" value="ECO:0007669"/>
    <property type="project" value="TreeGrafter"/>
</dbReference>
<dbReference type="CDD" id="cd08927">
    <property type="entry name" value="Hb-alpha-like"/>
    <property type="match status" value="1"/>
</dbReference>
<dbReference type="FunFam" id="1.10.490.10:FF:000002">
    <property type="entry name" value="Hemoglobin subunit alpha"/>
    <property type="match status" value="1"/>
</dbReference>
<dbReference type="Gene3D" id="1.10.490.10">
    <property type="entry name" value="Globins"/>
    <property type="match status" value="1"/>
</dbReference>
<dbReference type="InterPro" id="IPR000971">
    <property type="entry name" value="Globin"/>
</dbReference>
<dbReference type="InterPro" id="IPR009050">
    <property type="entry name" value="Globin-like_sf"/>
</dbReference>
<dbReference type="InterPro" id="IPR012292">
    <property type="entry name" value="Globin/Proto"/>
</dbReference>
<dbReference type="InterPro" id="IPR002338">
    <property type="entry name" value="Hemoglobin_a-typ"/>
</dbReference>
<dbReference type="InterPro" id="IPR050056">
    <property type="entry name" value="Hemoglobin_oxygen_transport"/>
</dbReference>
<dbReference type="InterPro" id="IPR002339">
    <property type="entry name" value="Hemoglobin_pi"/>
</dbReference>
<dbReference type="PANTHER" id="PTHR11442">
    <property type="entry name" value="HEMOGLOBIN FAMILY MEMBER"/>
    <property type="match status" value="1"/>
</dbReference>
<dbReference type="PANTHER" id="PTHR11442:SF48">
    <property type="entry name" value="HEMOGLOBIN SUBUNIT ALPHA"/>
    <property type="match status" value="1"/>
</dbReference>
<dbReference type="Pfam" id="PF00042">
    <property type="entry name" value="Globin"/>
    <property type="match status" value="1"/>
</dbReference>
<dbReference type="PRINTS" id="PR00612">
    <property type="entry name" value="ALPHAHAEM"/>
</dbReference>
<dbReference type="PRINTS" id="PR00815">
    <property type="entry name" value="PIHAEM"/>
</dbReference>
<dbReference type="SUPFAM" id="SSF46458">
    <property type="entry name" value="Globin-like"/>
    <property type="match status" value="1"/>
</dbReference>
<dbReference type="PROSITE" id="PS01033">
    <property type="entry name" value="GLOBIN"/>
    <property type="match status" value="1"/>
</dbReference>
<keyword id="KW-0007">Acetylation</keyword>
<keyword id="KW-0903">Direct protein sequencing</keyword>
<keyword id="KW-0349">Heme</keyword>
<keyword id="KW-0408">Iron</keyword>
<keyword id="KW-0479">Metal-binding</keyword>
<keyword id="KW-0561">Oxygen transport</keyword>
<keyword id="KW-0597">Phosphoprotein</keyword>
<keyword id="KW-0813">Transport</keyword>
<reference evidence="6" key="1">
    <citation type="journal article" date="2012" name="Biol. Chem.">
        <title>Development of a host blood meal database: de novo sequencing of hemoglobin from nine small mammals using mass spectrometry.</title>
        <authorList>
            <person name="Laskay U.A."/>
            <person name="Burg J."/>
            <person name="Kaleta E.J."/>
            <person name="Vilcins I.M."/>
            <person name="Telford Iii S.R."/>
            <person name="Barbour A.G."/>
            <person name="Wysocki V.H."/>
        </authorList>
    </citation>
    <scope>PROTEIN SEQUENCE</scope>
    <source>
        <tissue evidence="4">Erythrocyte</tissue>
    </source>
</reference>
<name>HBA_TAMMR</name>